<proteinExistence type="inferred from homology"/>
<reference key="1">
    <citation type="journal article" date="2006" name="Genome Biol.">
        <title>The genome of Rhizobium leguminosarum has recognizable core and accessory components.</title>
        <authorList>
            <person name="Young J.P.W."/>
            <person name="Crossman L.C."/>
            <person name="Johnston A.W.B."/>
            <person name="Thomson N.R."/>
            <person name="Ghazoui Z.F."/>
            <person name="Hull K.H."/>
            <person name="Wexler M."/>
            <person name="Curson A.R.J."/>
            <person name="Todd J.D."/>
            <person name="Poole P.S."/>
            <person name="Mauchline T.H."/>
            <person name="East A.K."/>
            <person name="Quail M.A."/>
            <person name="Churcher C."/>
            <person name="Arrowsmith C."/>
            <person name="Cherevach I."/>
            <person name="Chillingworth T."/>
            <person name="Clarke K."/>
            <person name="Cronin A."/>
            <person name="Davis P."/>
            <person name="Fraser A."/>
            <person name="Hance Z."/>
            <person name="Hauser H."/>
            <person name="Jagels K."/>
            <person name="Moule S."/>
            <person name="Mungall K."/>
            <person name="Norbertczak H."/>
            <person name="Rabbinowitsch E."/>
            <person name="Sanders M."/>
            <person name="Simmonds M."/>
            <person name="Whitehead S."/>
            <person name="Parkhill J."/>
        </authorList>
    </citation>
    <scope>NUCLEOTIDE SEQUENCE [LARGE SCALE GENOMIC DNA]</scope>
    <source>
        <strain>DSM 114642 / LMG 32736 / 3841</strain>
    </source>
</reference>
<comment type="function">
    <text evidence="1">Required for the formation of a threonylcarbamoyl group on adenosine at position 37 (t(6)A37) in tRNAs that read codons beginning with adenine. Is involved in the transfer of the threonylcarbamoyl moiety of threonylcarbamoyl-AMP (TC-AMP) to the N6 group of A37, together with TsaE and TsaB. TsaD likely plays a direct catalytic role in this reaction.</text>
</comment>
<comment type="catalytic activity">
    <reaction evidence="1">
        <text>L-threonylcarbamoyladenylate + adenosine(37) in tRNA = N(6)-L-threonylcarbamoyladenosine(37) in tRNA + AMP + H(+)</text>
        <dbReference type="Rhea" id="RHEA:37059"/>
        <dbReference type="Rhea" id="RHEA-COMP:10162"/>
        <dbReference type="Rhea" id="RHEA-COMP:10163"/>
        <dbReference type="ChEBI" id="CHEBI:15378"/>
        <dbReference type="ChEBI" id="CHEBI:73682"/>
        <dbReference type="ChEBI" id="CHEBI:74411"/>
        <dbReference type="ChEBI" id="CHEBI:74418"/>
        <dbReference type="ChEBI" id="CHEBI:456215"/>
        <dbReference type="EC" id="2.3.1.234"/>
    </reaction>
</comment>
<comment type="cofactor">
    <cofactor evidence="1">
        <name>Fe(2+)</name>
        <dbReference type="ChEBI" id="CHEBI:29033"/>
    </cofactor>
    <text evidence="1">Binds 1 Fe(2+) ion per subunit.</text>
</comment>
<comment type="subcellular location">
    <subcellularLocation>
        <location evidence="1">Cytoplasm</location>
    </subcellularLocation>
</comment>
<comment type="similarity">
    <text evidence="1">Belongs to the KAE1 / TsaD family.</text>
</comment>
<keyword id="KW-0012">Acyltransferase</keyword>
<keyword id="KW-0963">Cytoplasm</keyword>
<keyword id="KW-0408">Iron</keyword>
<keyword id="KW-0479">Metal-binding</keyword>
<keyword id="KW-0808">Transferase</keyword>
<keyword id="KW-0819">tRNA processing</keyword>
<evidence type="ECO:0000255" key="1">
    <source>
        <dbReference type="HAMAP-Rule" id="MF_01445"/>
    </source>
</evidence>
<dbReference type="EC" id="2.3.1.234" evidence="1"/>
<dbReference type="EMBL" id="AM236080">
    <property type="protein sequence ID" value="CAK09979.1"/>
    <property type="molecule type" value="Genomic_DNA"/>
</dbReference>
<dbReference type="RefSeq" id="WP_011653858.1">
    <property type="nucleotide sequence ID" value="NC_008380.1"/>
</dbReference>
<dbReference type="SMR" id="Q1MAQ8"/>
<dbReference type="EnsemblBacteria" id="CAK09979">
    <property type="protein sequence ID" value="CAK09979"/>
    <property type="gene ID" value="RL4494"/>
</dbReference>
<dbReference type="KEGG" id="rle:RL4494"/>
<dbReference type="eggNOG" id="COG0533">
    <property type="taxonomic scope" value="Bacteria"/>
</dbReference>
<dbReference type="HOGENOM" id="CLU_023208_0_2_5"/>
<dbReference type="Proteomes" id="UP000006575">
    <property type="component" value="Chromosome"/>
</dbReference>
<dbReference type="GO" id="GO:0005737">
    <property type="term" value="C:cytoplasm"/>
    <property type="evidence" value="ECO:0007669"/>
    <property type="project" value="UniProtKB-SubCell"/>
</dbReference>
<dbReference type="GO" id="GO:0005506">
    <property type="term" value="F:iron ion binding"/>
    <property type="evidence" value="ECO:0007669"/>
    <property type="project" value="UniProtKB-UniRule"/>
</dbReference>
<dbReference type="GO" id="GO:0061711">
    <property type="term" value="F:N(6)-L-threonylcarbamoyladenine synthase activity"/>
    <property type="evidence" value="ECO:0007669"/>
    <property type="project" value="UniProtKB-EC"/>
</dbReference>
<dbReference type="GO" id="GO:0002949">
    <property type="term" value="P:tRNA threonylcarbamoyladenosine modification"/>
    <property type="evidence" value="ECO:0007669"/>
    <property type="project" value="UniProtKB-UniRule"/>
</dbReference>
<dbReference type="CDD" id="cd24133">
    <property type="entry name" value="ASKHA_NBD_TsaD_bac"/>
    <property type="match status" value="1"/>
</dbReference>
<dbReference type="FunFam" id="3.30.420.40:FF:000040">
    <property type="entry name" value="tRNA N6-adenosine threonylcarbamoyltransferase"/>
    <property type="match status" value="1"/>
</dbReference>
<dbReference type="Gene3D" id="3.30.420.40">
    <property type="match status" value="2"/>
</dbReference>
<dbReference type="HAMAP" id="MF_01445">
    <property type="entry name" value="TsaD"/>
    <property type="match status" value="1"/>
</dbReference>
<dbReference type="InterPro" id="IPR043129">
    <property type="entry name" value="ATPase_NBD"/>
</dbReference>
<dbReference type="InterPro" id="IPR000905">
    <property type="entry name" value="Gcp-like_dom"/>
</dbReference>
<dbReference type="InterPro" id="IPR017861">
    <property type="entry name" value="KAE1/TsaD"/>
</dbReference>
<dbReference type="InterPro" id="IPR022450">
    <property type="entry name" value="TsaD"/>
</dbReference>
<dbReference type="NCBIfam" id="TIGR00329">
    <property type="entry name" value="gcp_kae1"/>
    <property type="match status" value="1"/>
</dbReference>
<dbReference type="NCBIfam" id="TIGR03723">
    <property type="entry name" value="T6A_TsaD_YgjD"/>
    <property type="match status" value="1"/>
</dbReference>
<dbReference type="PANTHER" id="PTHR11735">
    <property type="entry name" value="TRNA N6-ADENOSINE THREONYLCARBAMOYLTRANSFERASE"/>
    <property type="match status" value="1"/>
</dbReference>
<dbReference type="PANTHER" id="PTHR11735:SF6">
    <property type="entry name" value="TRNA N6-ADENOSINE THREONYLCARBAMOYLTRANSFERASE, MITOCHONDRIAL"/>
    <property type="match status" value="1"/>
</dbReference>
<dbReference type="Pfam" id="PF00814">
    <property type="entry name" value="TsaD"/>
    <property type="match status" value="1"/>
</dbReference>
<dbReference type="PRINTS" id="PR00789">
    <property type="entry name" value="OSIALOPTASE"/>
</dbReference>
<dbReference type="SUPFAM" id="SSF53067">
    <property type="entry name" value="Actin-like ATPase domain"/>
    <property type="match status" value="2"/>
</dbReference>
<organism>
    <name type="scientific">Rhizobium johnstonii (strain DSM 114642 / LMG 32736 / 3841)</name>
    <name type="common">Rhizobium leguminosarum bv. viciae</name>
    <dbReference type="NCBI Taxonomy" id="216596"/>
    <lineage>
        <taxon>Bacteria</taxon>
        <taxon>Pseudomonadati</taxon>
        <taxon>Pseudomonadota</taxon>
        <taxon>Alphaproteobacteria</taxon>
        <taxon>Hyphomicrobiales</taxon>
        <taxon>Rhizobiaceae</taxon>
        <taxon>Rhizobium/Agrobacterium group</taxon>
        <taxon>Rhizobium</taxon>
        <taxon>Rhizobium johnstonii</taxon>
    </lineage>
</organism>
<protein>
    <recommendedName>
        <fullName evidence="1">tRNA N6-adenosine threonylcarbamoyltransferase</fullName>
        <ecNumber evidence="1">2.3.1.234</ecNumber>
    </recommendedName>
    <alternativeName>
        <fullName evidence="1">N6-L-threonylcarbamoyladenine synthase</fullName>
        <shortName evidence="1">t(6)A synthase</shortName>
    </alternativeName>
    <alternativeName>
        <fullName evidence="1">t(6)A37 threonylcarbamoyladenosine biosynthesis protein TsaD</fullName>
    </alternativeName>
    <alternativeName>
        <fullName evidence="1">tRNA threonylcarbamoyladenosine biosynthesis protein TsaD</fullName>
    </alternativeName>
</protein>
<feature type="chain" id="PRO_0000303508" description="tRNA N6-adenosine threonylcarbamoyltransferase">
    <location>
        <begin position="1"/>
        <end position="365"/>
    </location>
</feature>
<feature type="binding site" evidence="1">
    <location>
        <position position="119"/>
    </location>
    <ligand>
        <name>Fe cation</name>
        <dbReference type="ChEBI" id="CHEBI:24875"/>
    </ligand>
</feature>
<feature type="binding site" evidence="1">
    <location>
        <position position="123"/>
    </location>
    <ligand>
        <name>Fe cation</name>
        <dbReference type="ChEBI" id="CHEBI:24875"/>
    </ligand>
</feature>
<feature type="binding site" evidence="1">
    <location>
        <begin position="141"/>
        <end position="145"/>
    </location>
    <ligand>
        <name>substrate</name>
    </ligand>
</feature>
<feature type="binding site" evidence="1">
    <location>
        <position position="174"/>
    </location>
    <ligand>
        <name>substrate</name>
    </ligand>
</feature>
<feature type="binding site" evidence="1">
    <location>
        <position position="187"/>
    </location>
    <ligand>
        <name>substrate</name>
    </ligand>
</feature>
<feature type="binding site" evidence="1">
    <location>
        <position position="288"/>
    </location>
    <ligand>
        <name>substrate</name>
    </ligand>
</feature>
<feature type="binding site" evidence="1">
    <location>
        <position position="316"/>
    </location>
    <ligand>
        <name>Fe cation</name>
        <dbReference type="ChEBI" id="CHEBI:24875"/>
    </ligand>
</feature>
<gene>
    <name evidence="1" type="primary">tsaD</name>
    <name type="synonym">gcp</name>
    <name type="ordered locus">RL4494</name>
</gene>
<name>TSAD_RHIJ3</name>
<accession>Q1MAQ8</accession>
<sequence>MVPFLRILGIETSCDETAAAVVERDAEGHSNVLSDVVLSQLDEHSAYGGVVPEIAARAHVEALDELIEEALKRANVSLNDVDAIAATSGPGLIGGLLVGLMTGKAIARAAGKPLYAINHLEGHALTARLTDGLSFPYLMLLVSGGHTQLILVRGVGQYERWGTTIDDALGEAFDKTAKLLGLPYPGGPAVERMARDGNPDRFDFPRPLVGEARLDFSFSGLKTAVRQAAQDIAPLSDQDVADICASFQKAVSRTLKDRIGRGLQRFKTEFPATGEKPALVVAGGVAANLELRGTLQALCNKNGFRFIAPPLHLCTDNAVMIAWAGLERMATGAAPDTLDVQPRSRWPLDSNAETLIGFGKRGAKA</sequence>